<comment type="subcellular location">
    <subcellularLocation>
        <location evidence="1">Cytoplasm</location>
    </subcellularLocation>
</comment>
<comment type="similarity">
    <text evidence="1">Belongs to the UPF0291 family.</text>
</comment>
<dbReference type="EMBL" id="CP000725">
    <property type="protein sequence ID" value="ABV10875.1"/>
    <property type="molecule type" value="Genomic_DNA"/>
</dbReference>
<dbReference type="RefSeq" id="WP_008808564.1">
    <property type="nucleotide sequence ID" value="NC_009785.1"/>
</dbReference>
<dbReference type="SMR" id="A8AVS6"/>
<dbReference type="STRING" id="467705.SGO_0570"/>
<dbReference type="KEGG" id="sgo:SGO_0570"/>
<dbReference type="eggNOG" id="COG4224">
    <property type="taxonomic scope" value="Bacteria"/>
</dbReference>
<dbReference type="HOGENOM" id="CLU_173137_0_2_9"/>
<dbReference type="Proteomes" id="UP000001131">
    <property type="component" value="Chromosome"/>
</dbReference>
<dbReference type="GO" id="GO:0005737">
    <property type="term" value="C:cytoplasm"/>
    <property type="evidence" value="ECO:0007669"/>
    <property type="project" value="UniProtKB-SubCell"/>
</dbReference>
<dbReference type="Gene3D" id="1.10.287.540">
    <property type="entry name" value="Helix hairpin bin"/>
    <property type="match status" value="1"/>
</dbReference>
<dbReference type="HAMAP" id="MF_01103">
    <property type="entry name" value="UPF0291"/>
    <property type="match status" value="1"/>
</dbReference>
<dbReference type="InterPro" id="IPR009242">
    <property type="entry name" value="DUF896"/>
</dbReference>
<dbReference type="NCBIfam" id="NF002711">
    <property type="entry name" value="PRK02539.1"/>
    <property type="match status" value="1"/>
</dbReference>
<dbReference type="PANTHER" id="PTHR37300">
    <property type="entry name" value="UPF0291 PROTEIN CBO2609/CLC_2481"/>
    <property type="match status" value="1"/>
</dbReference>
<dbReference type="PANTHER" id="PTHR37300:SF1">
    <property type="entry name" value="UPF0291 PROTEIN YNZC"/>
    <property type="match status" value="1"/>
</dbReference>
<dbReference type="Pfam" id="PF05979">
    <property type="entry name" value="DUF896"/>
    <property type="match status" value="1"/>
</dbReference>
<dbReference type="SUPFAM" id="SSF158221">
    <property type="entry name" value="YnzC-like"/>
    <property type="match status" value="1"/>
</dbReference>
<proteinExistence type="inferred from homology"/>
<evidence type="ECO:0000255" key="1">
    <source>
        <dbReference type="HAMAP-Rule" id="MF_01103"/>
    </source>
</evidence>
<evidence type="ECO:0000256" key="2">
    <source>
        <dbReference type="SAM" id="MobiDB-lite"/>
    </source>
</evidence>
<protein>
    <recommendedName>
        <fullName evidence="1">UPF0291 protein SGO_0570</fullName>
    </recommendedName>
</protein>
<feature type="chain" id="PRO_1000084800" description="UPF0291 protein SGO_0570">
    <location>
        <begin position="1"/>
        <end position="85"/>
    </location>
</feature>
<feature type="region of interest" description="Disordered" evidence="2">
    <location>
        <begin position="56"/>
        <end position="85"/>
    </location>
</feature>
<feature type="compositionally biased region" description="Basic and acidic residues" evidence="2">
    <location>
        <begin position="62"/>
        <end position="85"/>
    </location>
</feature>
<gene>
    <name type="ordered locus">SGO_0570</name>
</gene>
<accession>A8AVS6</accession>
<organism>
    <name type="scientific">Streptococcus gordonii (strain Challis / ATCC 35105 / BCRC 15272 / CH1 / DL1 / V288)</name>
    <dbReference type="NCBI Taxonomy" id="467705"/>
    <lineage>
        <taxon>Bacteria</taxon>
        <taxon>Bacillati</taxon>
        <taxon>Bacillota</taxon>
        <taxon>Bacilli</taxon>
        <taxon>Lactobacillales</taxon>
        <taxon>Streptococcaceae</taxon>
        <taxon>Streptococcus</taxon>
    </lineage>
</organism>
<name>Y570_STRGC</name>
<sequence>MDPKKIARINELAKKKKTEGLTAEEKVEQAKLREEYIEGYRRSVRHHIEGIKIVDEDGNDVTPEKLRQVQREKGLHGRSLDDPNS</sequence>
<reference key="1">
    <citation type="journal article" date="2007" name="J. Bacteriol.">
        <title>Genome-wide transcriptional changes in Streptococcus gordonii in response to competence signaling peptide.</title>
        <authorList>
            <person name="Vickerman M.M."/>
            <person name="Iobst S."/>
            <person name="Jesionowski A.M."/>
            <person name="Gill S.R."/>
        </authorList>
    </citation>
    <scope>NUCLEOTIDE SEQUENCE [LARGE SCALE GENOMIC DNA]</scope>
    <source>
        <strain>Challis / ATCC 35105 / BCRC 15272 / CH1 / DL1 / V288</strain>
    </source>
</reference>
<keyword id="KW-0963">Cytoplasm</keyword>
<keyword id="KW-1185">Reference proteome</keyword>